<gene>
    <name evidence="1" type="primary">thrB</name>
    <name type="ordered locus">Rru_A3053</name>
</gene>
<keyword id="KW-0028">Amino-acid biosynthesis</keyword>
<keyword id="KW-0067">ATP-binding</keyword>
<keyword id="KW-0418">Kinase</keyword>
<keyword id="KW-0547">Nucleotide-binding</keyword>
<keyword id="KW-1185">Reference proteome</keyword>
<keyword id="KW-0791">Threonine biosynthesis</keyword>
<keyword id="KW-0808">Transferase</keyword>
<sequence length="321" mass="35873">MAVYTDVSDDDLTTFLEGYDIGRLRACKGIAEGVENSNFLLVTDRGPHILTLYEKRVNPDDLPFFLGLLRHLAARDIPCPQPVAGRDGAVLHTLCDRPAAIVTFLDGVWPKRPEVRHCAQLGEALARLHLAGGDYAPTRRNSLSVDGWRPLFDAAAERADSVKPGLRAELETELDALEALWPHDLPTGIIHADLFPDNVFFVDDTLSGLIDFYFACDDFLAYDLAVCLNAWCFEGEREFNVTKARHMLTRYEKVRPLSDAEFAALPLLARGAAMRFLLTRLYDWLNTPPGAMVRPKDPMEYYHKLAFHRAVSGPGAYGLSR</sequence>
<feature type="chain" id="PRO_0000300807" description="Homoserine kinase">
    <location>
        <begin position="1"/>
        <end position="321"/>
    </location>
</feature>
<protein>
    <recommendedName>
        <fullName evidence="1">Homoserine kinase</fullName>
        <shortName evidence="1">HK</shortName>
        <shortName evidence="1">HSK</shortName>
        <ecNumber evidence="1">2.7.1.39</ecNumber>
    </recommendedName>
</protein>
<evidence type="ECO:0000255" key="1">
    <source>
        <dbReference type="HAMAP-Rule" id="MF_00301"/>
    </source>
</evidence>
<organism>
    <name type="scientific">Rhodospirillum rubrum (strain ATCC 11170 / ATH 1.1.1 / DSM 467 / LMG 4362 / NCIMB 8255 / S1)</name>
    <dbReference type="NCBI Taxonomy" id="269796"/>
    <lineage>
        <taxon>Bacteria</taxon>
        <taxon>Pseudomonadati</taxon>
        <taxon>Pseudomonadota</taxon>
        <taxon>Alphaproteobacteria</taxon>
        <taxon>Rhodospirillales</taxon>
        <taxon>Rhodospirillaceae</taxon>
        <taxon>Rhodospirillum</taxon>
    </lineage>
</organism>
<accession>Q2RPU7</accession>
<comment type="catalytic activity">
    <reaction evidence="1">
        <text>L-homoserine + ATP = O-phospho-L-homoserine + ADP + H(+)</text>
        <dbReference type="Rhea" id="RHEA:13985"/>
        <dbReference type="ChEBI" id="CHEBI:15378"/>
        <dbReference type="ChEBI" id="CHEBI:30616"/>
        <dbReference type="ChEBI" id="CHEBI:57476"/>
        <dbReference type="ChEBI" id="CHEBI:57590"/>
        <dbReference type="ChEBI" id="CHEBI:456216"/>
        <dbReference type="EC" id="2.7.1.39"/>
    </reaction>
</comment>
<comment type="pathway">
    <text evidence="1">Amino-acid biosynthesis; L-threonine biosynthesis; L-threonine from L-aspartate: step 4/5.</text>
</comment>
<comment type="similarity">
    <text evidence="1">Belongs to the pseudomonas-type ThrB family.</text>
</comment>
<name>KHSE_RHORT</name>
<reference key="1">
    <citation type="journal article" date="2011" name="Stand. Genomic Sci.">
        <title>Complete genome sequence of Rhodospirillum rubrum type strain (S1).</title>
        <authorList>
            <person name="Munk A.C."/>
            <person name="Copeland A."/>
            <person name="Lucas S."/>
            <person name="Lapidus A."/>
            <person name="Del Rio T.G."/>
            <person name="Barry K."/>
            <person name="Detter J.C."/>
            <person name="Hammon N."/>
            <person name="Israni S."/>
            <person name="Pitluck S."/>
            <person name="Brettin T."/>
            <person name="Bruce D."/>
            <person name="Han C."/>
            <person name="Tapia R."/>
            <person name="Gilna P."/>
            <person name="Schmutz J."/>
            <person name="Larimer F."/>
            <person name="Land M."/>
            <person name="Kyrpides N.C."/>
            <person name="Mavromatis K."/>
            <person name="Richardson P."/>
            <person name="Rohde M."/>
            <person name="Goeker M."/>
            <person name="Klenk H.P."/>
            <person name="Zhang Y."/>
            <person name="Roberts G.P."/>
            <person name="Reslewic S."/>
            <person name="Schwartz D.C."/>
        </authorList>
    </citation>
    <scope>NUCLEOTIDE SEQUENCE [LARGE SCALE GENOMIC DNA]</scope>
    <source>
        <strain>ATCC 11170 / ATH 1.1.1 / DSM 467 / LMG 4362 / NCIMB 8255 / S1</strain>
    </source>
</reference>
<dbReference type="EC" id="2.7.1.39" evidence="1"/>
<dbReference type="EMBL" id="CP000230">
    <property type="protein sequence ID" value="ABC23848.1"/>
    <property type="molecule type" value="Genomic_DNA"/>
</dbReference>
<dbReference type="RefSeq" id="WP_011390801.1">
    <property type="nucleotide sequence ID" value="NC_007643.1"/>
</dbReference>
<dbReference type="RefSeq" id="YP_428135.1">
    <property type="nucleotide sequence ID" value="NC_007643.1"/>
</dbReference>
<dbReference type="SMR" id="Q2RPU7"/>
<dbReference type="STRING" id="269796.Rru_A3053"/>
<dbReference type="EnsemblBacteria" id="ABC23848">
    <property type="protein sequence ID" value="ABC23848"/>
    <property type="gene ID" value="Rru_A3053"/>
</dbReference>
<dbReference type="KEGG" id="rru:Rru_A3053"/>
<dbReference type="PATRIC" id="fig|269796.9.peg.3164"/>
<dbReference type="eggNOG" id="COG2334">
    <property type="taxonomic scope" value="Bacteria"/>
</dbReference>
<dbReference type="HOGENOM" id="CLU_053300_1_0_5"/>
<dbReference type="PhylomeDB" id="Q2RPU7"/>
<dbReference type="UniPathway" id="UPA00050">
    <property type="reaction ID" value="UER00064"/>
</dbReference>
<dbReference type="Proteomes" id="UP000001929">
    <property type="component" value="Chromosome"/>
</dbReference>
<dbReference type="GO" id="GO:0005524">
    <property type="term" value="F:ATP binding"/>
    <property type="evidence" value="ECO:0007669"/>
    <property type="project" value="UniProtKB-KW"/>
</dbReference>
<dbReference type="GO" id="GO:0004413">
    <property type="term" value="F:homoserine kinase activity"/>
    <property type="evidence" value="ECO:0007669"/>
    <property type="project" value="UniProtKB-UniRule"/>
</dbReference>
<dbReference type="GO" id="GO:0009088">
    <property type="term" value="P:threonine biosynthetic process"/>
    <property type="evidence" value="ECO:0007669"/>
    <property type="project" value="UniProtKB-UniRule"/>
</dbReference>
<dbReference type="CDD" id="cd05153">
    <property type="entry name" value="HomoserineK_II"/>
    <property type="match status" value="1"/>
</dbReference>
<dbReference type="Gene3D" id="3.90.1200.10">
    <property type="match status" value="1"/>
</dbReference>
<dbReference type="Gene3D" id="3.30.200.20">
    <property type="entry name" value="Phosphorylase Kinase, domain 1"/>
    <property type="match status" value="1"/>
</dbReference>
<dbReference type="HAMAP" id="MF_00301">
    <property type="entry name" value="Homoser_kinase_2"/>
    <property type="match status" value="1"/>
</dbReference>
<dbReference type="InterPro" id="IPR002575">
    <property type="entry name" value="Aminoglycoside_PTrfase"/>
</dbReference>
<dbReference type="InterPro" id="IPR005280">
    <property type="entry name" value="Homoserine_kinase_II"/>
</dbReference>
<dbReference type="InterPro" id="IPR011009">
    <property type="entry name" value="Kinase-like_dom_sf"/>
</dbReference>
<dbReference type="InterPro" id="IPR050249">
    <property type="entry name" value="Pseudomonas-type_ThrB"/>
</dbReference>
<dbReference type="NCBIfam" id="NF003558">
    <property type="entry name" value="PRK05231.1"/>
    <property type="match status" value="1"/>
</dbReference>
<dbReference type="NCBIfam" id="TIGR00938">
    <property type="entry name" value="thrB_alt"/>
    <property type="match status" value="1"/>
</dbReference>
<dbReference type="PANTHER" id="PTHR21064:SF6">
    <property type="entry name" value="AMINOGLYCOSIDE PHOSPHOTRANSFERASE DOMAIN-CONTAINING PROTEIN"/>
    <property type="match status" value="1"/>
</dbReference>
<dbReference type="PANTHER" id="PTHR21064">
    <property type="entry name" value="AMINOGLYCOSIDE PHOSPHOTRANSFERASE DOMAIN-CONTAINING PROTEIN-RELATED"/>
    <property type="match status" value="1"/>
</dbReference>
<dbReference type="Pfam" id="PF01636">
    <property type="entry name" value="APH"/>
    <property type="match status" value="1"/>
</dbReference>
<dbReference type="SUPFAM" id="SSF56112">
    <property type="entry name" value="Protein kinase-like (PK-like)"/>
    <property type="match status" value="1"/>
</dbReference>
<proteinExistence type="inferred from homology"/>